<name>PHS_RHIR8</name>
<protein>
    <recommendedName>
        <fullName evidence="1">Putative pterin-4-alpha-carbinolamine dehydratase</fullName>
        <shortName evidence="1">PHS</shortName>
        <ecNumber evidence="1">4.2.1.96</ecNumber>
    </recommendedName>
    <alternativeName>
        <fullName evidence="1">4-alpha-hydroxy-tetrahydropterin dehydratase</fullName>
    </alternativeName>
    <alternativeName>
        <fullName evidence="1">Pterin carbinolamine dehydratase</fullName>
        <shortName evidence="1">PCD</shortName>
    </alternativeName>
</protein>
<evidence type="ECO:0000255" key="1">
    <source>
        <dbReference type="HAMAP-Rule" id="MF_00434"/>
    </source>
</evidence>
<accession>B9JCJ2</accession>
<gene>
    <name type="ordered locus">Arad_4381</name>
</gene>
<keyword id="KW-0456">Lyase</keyword>
<reference key="1">
    <citation type="journal article" date="2009" name="J. Bacteriol.">
        <title>Genome sequences of three Agrobacterium biovars help elucidate the evolution of multichromosome genomes in bacteria.</title>
        <authorList>
            <person name="Slater S.C."/>
            <person name="Goldman B.S."/>
            <person name="Goodner B."/>
            <person name="Setubal J.C."/>
            <person name="Farrand S.K."/>
            <person name="Nester E.W."/>
            <person name="Burr T.J."/>
            <person name="Banta L."/>
            <person name="Dickerman A.W."/>
            <person name="Paulsen I."/>
            <person name="Otten L."/>
            <person name="Suen G."/>
            <person name="Welch R."/>
            <person name="Almeida N.F."/>
            <person name="Arnold F."/>
            <person name="Burton O.T."/>
            <person name="Du Z."/>
            <person name="Ewing A."/>
            <person name="Godsy E."/>
            <person name="Heisel S."/>
            <person name="Houmiel K.L."/>
            <person name="Jhaveri J."/>
            <person name="Lu J."/>
            <person name="Miller N.M."/>
            <person name="Norton S."/>
            <person name="Chen Q."/>
            <person name="Phoolcharoen W."/>
            <person name="Ohlin V."/>
            <person name="Ondrusek D."/>
            <person name="Pride N."/>
            <person name="Stricklin S.L."/>
            <person name="Sun J."/>
            <person name="Wheeler C."/>
            <person name="Wilson L."/>
            <person name="Zhu H."/>
            <person name="Wood D.W."/>
        </authorList>
    </citation>
    <scope>NUCLEOTIDE SEQUENCE [LARGE SCALE GENOMIC DNA]</scope>
    <source>
        <strain>K84 / ATCC BAA-868</strain>
    </source>
</reference>
<organism>
    <name type="scientific">Rhizobium rhizogenes (strain K84 / ATCC BAA-868)</name>
    <name type="common">Agrobacterium radiobacter</name>
    <dbReference type="NCBI Taxonomy" id="311403"/>
    <lineage>
        <taxon>Bacteria</taxon>
        <taxon>Pseudomonadati</taxon>
        <taxon>Pseudomonadota</taxon>
        <taxon>Alphaproteobacteria</taxon>
        <taxon>Hyphomicrobiales</taxon>
        <taxon>Rhizobiaceae</taxon>
        <taxon>Rhizobium/Agrobacterium group</taxon>
        <taxon>Rhizobium</taxon>
    </lineage>
</organism>
<dbReference type="EC" id="4.2.1.96" evidence="1"/>
<dbReference type="EMBL" id="CP000628">
    <property type="protein sequence ID" value="ACM28103.1"/>
    <property type="molecule type" value="Genomic_DNA"/>
</dbReference>
<dbReference type="RefSeq" id="WP_007693723.1">
    <property type="nucleotide sequence ID" value="NC_011985.1"/>
</dbReference>
<dbReference type="SMR" id="B9JCJ2"/>
<dbReference type="STRING" id="311403.Arad_4381"/>
<dbReference type="KEGG" id="ara:Arad_4381"/>
<dbReference type="eggNOG" id="COG2154">
    <property type="taxonomic scope" value="Bacteria"/>
</dbReference>
<dbReference type="HOGENOM" id="CLU_081974_3_2_5"/>
<dbReference type="Proteomes" id="UP000001600">
    <property type="component" value="Chromosome 1"/>
</dbReference>
<dbReference type="GO" id="GO:0008124">
    <property type="term" value="F:4-alpha-hydroxytetrahydrobiopterin dehydratase activity"/>
    <property type="evidence" value="ECO:0007669"/>
    <property type="project" value="UniProtKB-UniRule"/>
</dbReference>
<dbReference type="GO" id="GO:0006729">
    <property type="term" value="P:tetrahydrobiopterin biosynthetic process"/>
    <property type="evidence" value="ECO:0007669"/>
    <property type="project" value="InterPro"/>
</dbReference>
<dbReference type="CDD" id="cd00914">
    <property type="entry name" value="PCD_DCoH_subfamily_b"/>
    <property type="match status" value="1"/>
</dbReference>
<dbReference type="Gene3D" id="3.30.1360.20">
    <property type="entry name" value="Transcriptional coactivator/pterin dehydratase"/>
    <property type="match status" value="1"/>
</dbReference>
<dbReference type="HAMAP" id="MF_00434">
    <property type="entry name" value="Pterin_4_alpha"/>
    <property type="match status" value="1"/>
</dbReference>
<dbReference type="InterPro" id="IPR036428">
    <property type="entry name" value="PCD_sf"/>
</dbReference>
<dbReference type="InterPro" id="IPR001533">
    <property type="entry name" value="Pterin_deHydtase"/>
</dbReference>
<dbReference type="NCBIfam" id="NF002018">
    <property type="entry name" value="PRK00823.1-3"/>
    <property type="match status" value="1"/>
</dbReference>
<dbReference type="PANTHER" id="PTHR12599">
    <property type="entry name" value="PTERIN-4-ALPHA-CARBINOLAMINE DEHYDRATASE"/>
    <property type="match status" value="1"/>
</dbReference>
<dbReference type="PANTHER" id="PTHR12599:SF0">
    <property type="entry name" value="PTERIN-4-ALPHA-CARBINOLAMINE DEHYDRATASE"/>
    <property type="match status" value="1"/>
</dbReference>
<dbReference type="Pfam" id="PF01329">
    <property type="entry name" value="Pterin_4a"/>
    <property type="match status" value="1"/>
</dbReference>
<dbReference type="SUPFAM" id="SSF55248">
    <property type="entry name" value="PCD-like"/>
    <property type="match status" value="1"/>
</dbReference>
<comment type="catalytic activity">
    <reaction evidence="1">
        <text>(4aS,6R)-4a-hydroxy-L-erythro-5,6,7,8-tetrahydrobiopterin = (6R)-L-erythro-6,7-dihydrobiopterin + H2O</text>
        <dbReference type="Rhea" id="RHEA:11920"/>
        <dbReference type="ChEBI" id="CHEBI:15377"/>
        <dbReference type="ChEBI" id="CHEBI:15642"/>
        <dbReference type="ChEBI" id="CHEBI:43120"/>
        <dbReference type="EC" id="4.2.1.96"/>
    </reaction>
</comment>
<comment type="similarity">
    <text evidence="1">Belongs to the pterin-4-alpha-carbinolamine dehydratase family.</text>
</comment>
<sequence>MKYEKLEPAAIDETVAGLVGWTLAADRLSISKSYKFRNFVEAFGFMTEAALTAEKLNHHPEWFNVYSRVDVKLTTHDANGLTDHDVKLAKAMEKAAARRAD</sequence>
<feature type="chain" id="PRO_1000134943" description="Putative pterin-4-alpha-carbinolamine dehydratase">
    <location>
        <begin position="1"/>
        <end position="101"/>
    </location>
</feature>
<proteinExistence type="inferred from homology"/>